<name>PDXB_ECO57</name>
<proteinExistence type="inferred from homology"/>
<dbReference type="EC" id="1.1.1.290" evidence="1"/>
<dbReference type="EMBL" id="AE005174">
    <property type="protein sequence ID" value="AAG57449.1"/>
    <property type="molecule type" value="Genomic_DNA"/>
</dbReference>
<dbReference type="EMBL" id="BA000007">
    <property type="protein sequence ID" value="BAB36627.1"/>
    <property type="molecule type" value="Genomic_DNA"/>
</dbReference>
<dbReference type="PIR" id="D91029">
    <property type="entry name" value="D91029"/>
</dbReference>
<dbReference type="PIR" id="E85873">
    <property type="entry name" value="E85873"/>
</dbReference>
<dbReference type="RefSeq" id="NP_311231.1">
    <property type="nucleotide sequence ID" value="NC_002695.1"/>
</dbReference>
<dbReference type="RefSeq" id="WP_000699109.1">
    <property type="nucleotide sequence ID" value="NZ_VOAI01000001.1"/>
</dbReference>
<dbReference type="SMR" id="Q8XCR0"/>
<dbReference type="STRING" id="155864.Z3582"/>
<dbReference type="GeneID" id="915698"/>
<dbReference type="KEGG" id="ece:Z3582"/>
<dbReference type="KEGG" id="ecs:ECs_3204"/>
<dbReference type="PATRIC" id="fig|386585.9.peg.3345"/>
<dbReference type="eggNOG" id="COG0111">
    <property type="taxonomic scope" value="Bacteria"/>
</dbReference>
<dbReference type="HOGENOM" id="CLU_019796_4_0_6"/>
<dbReference type="OMA" id="SAPGCNA"/>
<dbReference type="UniPathway" id="UPA00244">
    <property type="reaction ID" value="UER00310"/>
</dbReference>
<dbReference type="Proteomes" id="UP000000558">
    <property type="component" value="Chromosome"/>
</dbReference>
<dbReference type="Proteomes" id="UP000002519">
    <property type="component" value="Chromosome"/>
</dbReference>
<dbReference type="GO" id="GO:0005829">
    <property type="term" value="C:cytosol"/>
    <property type="evidence" value="ECO:0007669"/>
    <property type="project" value="TreeGrafter"/>
</dbReference>
<dbReference type="GO" id="GO:0033711">
    <property type="term" value="F:4-phosphoerythronate dehydrogenase activity"/>
    <property type="evidence" value="ECO:0007669"/>
    <property type="project" value="UniProtKB-EC"/>
</dbReference>
<dbReference type="GO" id="GO:0051287">
    <property type="term" value="F:NAD binding"/>
    <property type="evidence" value="ECO:0007669"/>
    <property type="project" value="InterPro"/>
</dbReference>
<dbReference type="GO" id="GO:0046983">
    <property type="term" value="F:protein dimerization activity"/>
    <property type="evidence" value="ECO:0007669"/>
    <property type="project" value="InterPro"/>
</dbReference>
<dbReference type="GO" id="GO:0036001">
    <property type="term" value="P:'de novo' pyridoxal 5'-phosphate biosynthetic process"/>
    <property type="evidence" value="ECO:0007669"/>
    <property type="project" value="TreeGrafter"/>
</dbReference>
<dbReference type="GO" id="GO:0008615">
    <property type="term" value="P:pyridoxine biosynthetic process"/>
    <property type="evidence" value="ECO:0007669"/>
    <property type="project" value="UniProtKB-UniRule"/>
</dbReference>
<dbReference type="CDD" id="cd12158">
    <property type="entry name" value="ErythrP_dh"/>
    <property type="match status" value="1"/>
</dbReference>
<dbReference type="FunFam" id="3.30.1370.170:FF:000001">
    <property type="entry name" value="Erythronate-4-phosphate dehydrogenase"/>
    <property type="match status" value="1"/>
</dbReference>
<dbReference type="FunFam" id="3.40.50.720:FF:000093">
    <property type="entry name" value="Erythronate-4-phosphate dehydrogenase"/>
    <property type="match status" value="1"/>
</dbReference>
<dbReference type="Gene3D" id="3.30.1370.170">
    <property type="match status" value="1"/>
</dbReference>
<dbReference type="Gene3D" id="3.40.50.720">
    <property type="entry name" value="NAD(P)-binding Rossmann-like Domain"/>
    <property type="match status" value="2"/>
</dbReference>
<dbReference type="HAMAP" id="MF_01825">
    <property type="entry name" value="PdxB"/>
    <property type="match status" value="1"/>
</dbReference>
<dbReference type="InterPro" id="IPR006139">
    <property type="entry name" value="D-isomer_2_OHA_DH_cat_dom"/>
</dbReference>
<dbReference type="InterPro" id="IPR029753">
    <property type="entry name" value="D-isomer_DH_CS"/>
</dbReference>
<dbReference type="InterPro" id="IPR029752">
    <property type="entry name" value="D-isomer_DH_CS1"/>
</dbReference>
<dbReference type="InterPro" id="IPR006140">
    <property type="entry name" value="D-isomer_DH_NAD-bd"/>
</dbReference>
<dbReference type="InterPro" id="IPR020921">
    <property type="entry name" value="Erythronate-4-P_DHase"/>
</dbReference>
<dbReference type="InterPro" id="IPR024531">
    <property type="entry name" value="Erythronate-4-P_DHase_dimer"/>
</dbReference>
<dbReference type="InterPro" id="IPR036291">
    <property type="entry name" value="NAD(P)-bd_dom_sf"/>
</dbReference>
<dbReference type="InterPro" id="IPR038251">
    <property type="entry name" value="PdxB_dimer_sf"/>
</dbReference>
<dbReference type="NCBIfam" id="NF001309">
    <property type="entry name" value="PRK00257.1"/>
    <property type="match status" value="1"/>
</dbReference>
<dbReference type="NCBIfam" id="NF011966">
    <property type="entry name" value="PRK15438.1"/>
    <property type="match status" value="1"/>
</dbReference>
<dbReference type="PANTHER" id="PTHR42938">
    <property type="entry name" value="FORMATE DEHYDROGENASE 1"/>
    <property type="match status" value="1"/>
</dbReference>
<dbReference type="PANTHER" id="PTHR42938:SF9">
    <property type="entry name" value="FORMATE DEHYDROGENASE 1"/>
    <property type="match status" value="1"/>
</dbReference>
<dbReference type="Pfam" id="PF00389">
    <property type="entry name" value="2-Hacid_dh"/>
    <property type="match status" value="1"/>
</dbReference>
<dbReference type="Pfam" id="PF02826">
    <property type="entry name" value="2-Hacid_dh_C"/>
    <property type="match status" value="1"/>
</dbReference>
<dbReference type="Pfam" id="PF11890">
    <property type="entry name" value="DUF3410"/>
    <property type="match status" value="1"/>
</dbReference>
<dbReference type="SUPFAM" id="SSF52283">
    <property type="entry name" value="Formate/glycerate dehydrogenase catalytic domain-like"/>
    <property type="match status" value="1"/>
</dbReference>
<dbReference type="SUPFAM" id="SSF51735">
    <property type="entry name" value="NAD(P)-binding Rossmann-fold domains"/>
    <property type="match status" value="1"/>
</dbReference>
<dbReference type="PROSITE" id="PS00065">
    <property type="entry name" value="D_2_HYDROXYACID_DH_1"/>
    <property type="match status" value="1"/>
</dbReference>
<dbReference type="PROSITE" id="PS00671">
    <property type="entry name" value="D_2_HYDROXYACID_DH_3"/>
    <property type="match status" value="1"/>
</dbReference>
<sequence length="378" mass="41298">MKILVDENMPYARDLFSRLGEVIAVPGRPIPVAQLADADALMVRSVTKVNESLLAGKPIKFVGTATAGTDHVDEAWLKQAGIGFSAAPGCNAIAVVEYVFSSLLMLAERDGFSLHERTVGIVGVGNVGRRLQARLEALGIKTLLCDPPRADCGDEGDFRSLDELVQRADILTFHTPLFKDGPYKTLHLADEKLIRSLKPGAILINACRGAVVDNTALLTCLNEGQKLSVVLDVWEGEPELNVELLTKVDIGTPHIAGYTLEGKARGTTQVFEAYSKFIGHEQHVALDTLLPAPEFGRITLHGPLDQPTLKRLVHLVYDVRRDDAPLRKVAGIPGEFDKLRKNYLERREWSSLYVICDDASAASLLCKLGFNAVHHPAR</sequence>
<gene>
    <name evidence="1" type="primary">pdxB</name>
    <name type="ordered locus">Z3582</name>
    <name type="ordered locus">ECs3204</name>
</gene>
<comment type="function">
    <text evidence="1">Catalyzes the oxidation of erythronate-4-phosphate to 3-hydroxy-2-oxo-4-phosphonooxybutanoate.</text>
</comment>
<comment type="catalytic activity">
    <reaction evidence="1">
        <text>4-phospho-D-erythronate + NAD(+) = (R)-3-hydroxy-2-oxo-4-phosphooxybutanoate + NADH + H(+)</text>
        <dbReference type="Rhea" id="RHEA:18829"/>
        <dbReference type="ChEBI" id="CHEBI:15378"/>
        <dbReference type="ChEBI" id="CHEBI:57540"/>
        <dbReference type="ChEBI" id="CHEBI:57945"/>
        <dbReference type="ChEBI" id="CHEBI:58538"/>
        <dbReference type="ChEBI" id="CHEBI:58766"/>
        <dbReference type="EC" id="1.1.1.290"/>
    </reaction>
</comment>
<comment type="pathway">
    <text evidence="1">Cofactor biosynthesis; pyridoxine 5'-phosphate biosynthesis; pyridoxine 5'-phosphate from D-erythrose 4-phosphate: step 2/5.</text>
</comment>
<comment type="subunit">
    <text evidence="1">Homodimer.</text>
</comment>
<comment type="subcellular location">
    <subcellularLocation>
        <location evidence="1">Cytoplasm</location>
    </subcellularLocation>
</comment>
<comment type="similarity">
    <text evidence="1">Belongs to the D-isomer specific 2-hydroxyacid dehydrogenase family. PdxB subfamily.</text>
</comment>
<protein>
    <recommendedName>
        <fullName evidence="1">Erythronate-4-phosphate dehydrogenase</fullName>
        <ecNumber evidence="1">1.1.1.290</ecNumber>
    </recommendedName>
</protein>
<evidence type="ECO:0000255" key="1">
    <source>
        <dbReference type="HAMAP-Rule" id="MF_01825"/>
    </source>
</evidence>
<feature type="chain" id="PRO_0000075977" description="Erythronate-4-phosphate dehydrogenase">
    <location>
        <begin position="1"/>
        <end position="378"/>
    </location>
</feature>
<feature type="active site" evidence="1">
    <location>
        <position position="208"/>
    </location>
</feature>
<feature type="active site" evidence="1">
    <location>
        <position position="237"/>
    </location>
</feature>
<feature type="active site" description="Proton donor" evidence="1">
    <location>
        <position position="254"/>
    </location>
</feature>
<feature type="binding site" evidence="1">
    <location>
        <position position="45"/>
    </location>
    <ligand>
        <name>substrate</name>
    </ligand>
</feature>
<feature type="binding site" evidence="1">
    <location>
        <position position="66"/>
    </location>
    <ligand>
        <name>substrate</name>
    </ligand>
</feature>
<feature type="binding site" evidence="1">
    <location>
        <position position="146"/>
    </location>
    <ligand>
        <name>NAD(+)</name>
        <dbReference type="ChEBI" id="CHEBI:57540"/>
    </ligand>
</feature>
<feature type="binding site" evidence="1">
    <location>
        <position position="175"/>
    </location>
    <ligand>
        <name>NAD(+)</name>
        <dbReference type="ChEBI" id="CHEBI:57540"/>
    </ligand>
</feature>
<feature type="binding site" evidence="1">
    <location>
        <position position="232"/>
    </location>
    <ligand>
        <name>NAD(+)</name>
        <dbReference type="ChEBI" id="CHEBI:57540"/>
    </ligand>
</feature>
<feature type="binding site" evidence="1">
    <location>
        <position position="257"/>
    </location>
    <ligand>
        <name>NAD(+)</name>
        <dbReference type="ChEBI" id="CHEBI:57540"/>
    </ligand>
</feature>
<feature type="binding site" evidence="1">
    <location>
        <position position="258"/>
    </location>
    <ligand>
        <name>substrate</name>
    </ligand>
</feature>
<organism>
    <name type="scientific">Escherichia coli O157:H7</name>
    <dbReference type="NCBI Taxonomy" id="83334"/>
    <lineage>
        <taxon>Bacteria</taxon>
        <taxon>Pseudomonadati</taxon>
        <taxon>Pseudomonadota</taxon>
        <taxon>Gammaproteobacteria</taxon>
        <taxon>Enterobacterales</taxon>
        <taxon>Enterobacteriaceae</taxon>
        <taxon>Escherichia</taxon>
    </lineage>
</organism>
<keyword id="KW-0963">Cytoplasm</keyword>
<keyword id="KW-0520">NAD</keyword>
<keyword id="KW-0560">Oxidoreductase</keyword>
<keyword id="KW-0664">Pyridoxine biosynthesis</keyword>
<keyword id="KW-1185">Reference proteome</keyword>
<accession>Q8XCR0</accession>
<reference key="1">
    <citation type="journal article" date="2001" name="Nature">
        <title>Genome sequence of enterohaemorrhagic Escherichia coli O157:H7.</title>
        <authorList>
            <person name="Perna N.T."/>
            <person name="Plunkett G. III"/>
            <person name="Burland V."/>
            <person name="Mau B."/>
            <person name="Glasner J.D."/>
            <person name="Rose D.J."/>
            <person name="Mayhew G.F."/>
            <person name="Evans P.S."/>
            <person name="Gregor J."/>
            <person name="Kirkpatrick H.A."/>
            <person name="Posfai G."/>
            <person name="Hackett J."/>
            <person name="Klink S."/>
            <person name="Boutin A."/>
            <person name="Shao Y."/>
            <person name="Miller L."/>
            <person name="Grotbeck E.J."/>
            <person name="Davis N.W."/>
            <person name="Lim A."/>
            <person name="Dimalanta E.T."/>
            <person name="Potamousis K."/>
            <person name="Apodaca J."/>
            <person name="Anantharaman T.S."/>
            <person name="Lin J."/>
            <person name="Yen G."/>
            <person name="Schwartz D.C."/>
            <person name="Welch R.A."/>
            <person name="Blattner F.R."/>
        </authorList>
    </citation>
    <scope>NUCLEOTIDE SEQUENCE [LARGE SCALE GENOMIC DNA]</scope>
    <source>
        <strain>O157:H7 / EDL933 / ATCC 700927 / EHEC</strain>
    </source>
</reference>
<reference key="2">
    <citation type="journal article" date="2001" name="DNA Res.">
        <title>Complete genome sequence of enterohemorrhagic Escherichia coli O157:H7 and genomic comparison with a laboratory strain K-12.</title>
        <authorList>
            <person name="Hayashi T."/>
            <person name="Makino K."/>
            <person name="Ohnishi M."/>
            <person name="Kurokawa K."/>
            <person name="Ishii K."/>
            <person name="Yokoyama K."/>
            <person name="Han C.-G."/>
            <person name="Ohtsubo E."/>
            <person name="Nakayama K."/>
            <person name="Murata T."/>
            <person name="Tanaka M."/>
            <person name="Tobe T."/>
            <person name="Iida T."/>
            <person name="Takami H."/>
            <person name="Honda T."/>
            <person name="Sasakawa C."/>
            <person name="Ogasawara N."/>
            <person name="Yasunaga T."/>
            <person name="Kuhara S."/>
            <person name="Shiba T."/>
            <person name="Hattori M."/>
            <person name="Shinagawa H."/>
        </authorList>
    </citation>
    <scope>NUCLEOTIDE SEQUENCE [LARGE SCALE GENOMIC DNA]</scope>
    <source>
        <strain>O157:H7 / Sakai / RIMD 0509952 / EHEC</strain>
    </source>
</reference>